<proteinExistence type="inferred from homology"/>
<feature type="chain" id="PRO_0000128973" description="DNA-directed RNA polymerase subunit omega">
    <location>
        <begin position="1"/>
        <end position="91"/>
    </location>
</feature>
<accession>P0A803</accession>
<accession>P08374</accession>
<name>RPOZ_SALTY</name>
<dbReference type="EC" id="2.7.7.6"/>
<dbReference type="EMBL" id="AE006468">
    <property type="protein sequence ID" value="AAL22600.1"/>
    <property type="molecule type" value="Genomic_DNA"/>
</dbReference>
<dbReference type="RefSeq" id="NP_462641.1">
    <property type="nucleotide sequence ID" value="NC_003197.2"/>
</dbReference>
<dbReference type="RefSeq" id="WP_000135058.1">
    <property type="nucleotide sequence ID" value="NC_003197.2"/>
</dbReference>
<dbReference type="SMR" id="P0A803"/>
<dbReference type="STRING" id="99287.STM3741"/>
<dbReference type="PaxDb" id="99287-STM3741"/>
<dbReference type="GeneID" id="1255265"/>
<dbReference type="GeneID" id="98390719"/>
<dbReference type="KEGG" id="stm:STM3741"/>
<dbReference type="PATRIC" id="fig|99287.12.peg.3958"/>
<dbReference type="HOGENOM" id="CLU_125406_5_3_6"/>
<dbReference type="OMA" id="NVDNRFQ"/>
<dbReference type="PhylomeDB" id="P0A803"/>
<dbReference type="BioCyc" id="SENT99287:STM3741-MONOMER"/>
<dbReference type="PRO" id="PR:P0A803"/>
<dbReference type="Proteomes" id="UP000001014">
    <property type="component" value="Chromosome"/>
</dbReference>
<dbReference type="GO" id="GO:0000345">
    <property type="term" value="C:cytosolic DNA-directed RNA polymerase complex"/>
    <property type="evidence" value="ECO:0000318"/>
    <property type="project" value="GO_Central"/>
</dbReference>
<dbReference type="GO" id="GO:0001000">
    <property type="term" value="F:bacterial-type RNA polymerase core enzyme binding"/>
    <property type="evidence" value="ECO:0000318"/>
    <property type="project" value="GO_Central"/>
</dbReference>
<dbReference type="GO" id="GO:0003677">
    <property type="term" value="F:DNA binding"/>
    <property type="evidence" value="ECO:0007669"/>
    <property type="project" value="UniProtKB-UniRule"/>
</dbReference>
<dbReference type="GO" id="GO:0003899">
    <property type="term" value="F:DNA-directed RNA polymerase activity"/>
    <property type="evidence" value="ECO:0007669"/>
    <property type="project" value="UniProtKB-UniRule"/>
</dbReference>
<dbReference type="GO" id="GO:0006352">
    <property type="term" value="P:DNA-templated transcription initiation"/>
    <property type="evidence" value="ECO:0000318"/>
    <property type="project" value="GO_Central"/>
</dbReference>
<dbReference type="FunFam" id="3.90.940.10:FF:000001">
    <property type="entry name" value="DNA-directed RNA polymerase subunit omega"/>
    <property type="match status" value="1"/>
</dbReference>
<dbReference type="Gene3D" id="3.90.940.10">
    <property type="match status" value="1"/>
</dbReference>
<dbReference type="HAMAP" id="MF_00366">
    <property type="entry name" value="RNApol_bact_RpoZ"/>
    <property type="match status" value="1"/>
</dbReference>
<dbReference type="InterPro" id="IPR003716">
    <property type="entry name" value="DNA-dir_RNA_pol_omega"/>
</dbReference>
<dbReference type="InterPro" id="IPR006110">
    <property type="entry name" value="Pol_omega/Rpo6/RPB6"/>
</dbReference>
<dbReference type="InterPro" id="IPR036161">
    <property type="entry name" value="RPB6/omega-like_sf"/>
</dbReference>
<dbReference type="NCBIfam" id="TIGR00690">
    <property type="entry name" value="rpoZ"/>
    <property type="match status" value="1"/>
</dbReference>
<dbReference type="PANTHER" id="PTHR34476">
    <property type="entry name" value="DNA-DIRECTED RNA POLYMERASE SUBUNIT OMEGA"/>
    <property type="match status" value="1"/>
</dbReference>
<dbReference type="PANTHER" id="PTHR34476:SF1">
    <property type="entry name" value="DNA-DIRECTED RNA POLYMERASE SUBUNIT OMEGA"/>
    <property type="match status" value="1"/>
</dbReference>
<dbReference type="Pfam" id="PF01192">
    <property type="entry name" value="RNA_pol_Rpb6"/>
    <property type="match status" value="1"/>
</dbReference>
<dbReference type="SMART" id="SM01409">
    <property type="entry name" value="RNA_pol_Rpb6"/>
    <property type="match status" value="1"/>
</dbReference>
<dbReference type="SUPFAM" id="SSF63562">
    <property type="entry name" value="RPB6/omega subunit-like"/>
    <property type="match status" value="1"/>
</dbReference>
<comment type="function">
    <text evidence="1">Promotes RNA polymerase assembly. Latches the N- and C-terminal regions of the beta' subunit thereby facilitating its interaction with the beta and alpha subunits (By similarity).</text>
</comment>
<comment type="catalytic activity">
    <reaction>
        <text>RNA(n) + a ribonucleoside 5'-triphosphate = RNA(n+1) + diphosphate</text>
        <dbReference type="Rhea" id="RHEA:21248"/>
        <dbReference type="Rhea" id="RHEA-COMP:14527"/>
        <dbReference type="Rhea" id="RHEA-COMP:17342"/>
        <dbReference type="ChEBI" id="CHEBI:33019"/>
        <dbReference type="ChEBI" id="CHEBI:61557"/>
        <dbReference type="ChEBI" id="CHEBI:140395"/>
        <dbReference type="EC" id="2.7.7.6"/>
    </reaction>
</comment>
<comment type="subunit">
    <text evidence="1">The RNAP catalytic core consists of 2 alpha, 1 beta, 1 beta' and 1 omega subunit. When a sigma factor is associated with the core the holoenzyme is formed, which can initiate transcription (By similarity).</text>
</comment>
<comment type="similarity">
    <text evidence="2">Belongs to the RNA polymerase subunit omega family.</text>
</comment>
<gene>
    <name type="primary">rpoZ</name>
    <name type="ordered locus">STM3741</name>
</gene>
<keyword id="KW-0240">DNA-directed RNA polymerase</keyword>
<keyword id="KW-0548">Nucleotidyltransferase</keyword>
<keyword id="KW-1185">Reference proteome</keyword>
<keyword id="KW-0804">Transcription</keyword>
<keyword id="KW-0808">Transferase</keyword>
<sequence length="91" mass="10237">MARVTVQDAVEKIGNRFDLVLVAARRARQMQVGGKDPLVPEENDKTTVIALREIEEGLINNQILDVRERQEQQEQEAAELQAVTAIAEGRR</sequence>
<organism>
    <name type="scientific">Salmonella typhimurium (strain LT2 / SGSC1412 / ATCC 700720)</name>
    <dbReference type="NCBI Taxonomy" id="99287"/>
    <lineage>
        <taxon>Bacteria</taxon>
        <taxon>Pseudomonadati</taxon>
        <taxon>Pseudomonadota</taxon>
        <taxon>Gammaproteobacteria</taxon>
        <taxon>Enterobacterales</taxon>
        <taxon>Enterobacteriaceae</taxon>
        <taxon>Salmonella</taxon>
    </lineage>
</organism>
<protein>
    <recommendedName>
        <fullName>DNA-directed RNA polymerase subunit omega</fullName>
        <shortName>RNAP omega subunit</shortName>
        <ecNumber>2.7.7.6</ecNumber>
    </recommendedName>
    <alternativeName>
        <fullName>RNA polymerase omega subunit</fullName>
    </alternativeName>
    <alternativeName>
        <fullName>Transcriptase subunit omega</fullName>
    </alternativeName>
</protein>
<reference key="1">
    <citation type="journal article" date="2001" name="Nature">
        <title>Complete genome sequence of Salmonella enterica serovar Typhimurium LT2.</title>
        <authorList>
            <person name="McClelland M."/>
            <person name="Sanderson K.E."/>
            <person name="Spieth J."/>
            <person name="Clifton S.W."/>
            <person name="Latreille P."/>
            <person name="Courtney L."/>
            <person name="Porwollik S."/>
            <person name="Ali J."/>
            <person name="Dante M."/>
            <person name="Du F."/>
            <person name="Hou S."/>
            <person name="Layman D."/>
            <person name="Leonard S."/>
            <person name="Nguyen C."/>
            <person name="Scott K."/>
            <person name="Holmes A."/>
            <person name="Grewal N."/>
            <person name="Mulvaney E."/>
            <person name="Ryan E."/>
            <person name="Sun H."/>
            <person name="Florea L."/>
            <person name="Miller W."/>
            <person name="Stoneking T."/>
            <person name="Nhan M."/>
            <person name="Waterston R."/>
            <person name="Wilson R.K."/>
        </authorList>
    </citation>
    <scope>NUCLEOTIDE SEQUENCE [LARGE SCALE GENOMIC DNA]</scope>
    <source>
        <strain>LT2 / SGSC1412 / ATCC 700720</strain>
    </source>
</reference>
<evidence type="ECO:0000250" key="1"/>
<evidence type="ECO:0000305" key="2"/>